<proteinExistence type="evidence at protein level"/>
<accession>E2E2N4</accession>
<reference key="1">
    <citation type="journal article" date="2010" name="Plant Mol. Biol.">
        <title>Terpene synthases of oregano (Origanum vulgare L.) and their roles in the pathway and regulation of terpene biosynthesis.</title>
        <authorList>
            <person name="Crocoll C."/>
            <person name="Asbach J."/>
            <person name="Novak J."/>
            <person name="Gershenzon J."/>
            <person name="Degenhardt J."/>
        </authorList>
    </citation>
    <scope>NUCLEOTIDE SEQUENCE [MRNA]</scope>
    <scope>FUNCTION</scope>
    <scope>CATALYTIC ACTIVITY</scope>
    <scope>PATHWAY</scope>
    <scope>TISSUE SPECIFICITY</scope>
    <source>
        <strain>cv. f02-04</strain>
        <tissue>Trichome gland</tissue>
    </source>
</reference>
<reference key="2">
    <citation type="thesis" date="2011" institute="Friedrich Schiller University of Jena" country="Germany">
        <title>Biosynthesis of the phenolic monoterpenes, thymol and carvacrol, by terpene synthases and cytochrome P450s in oregano and thyme.</title>
        <authorList>
            <person name="Crocoll C."/>
        </authorList>
    </citation>
    <scope>FUNCTION</scope>
    <scope>CATALYTIC ACTIVITY</scope>
    <scope>PATHWAY</scope>
</reference>
<reference key="3">
    <citation type="journal article" date="2017" name="Plant Physiol. Biochem.">
        <title>Effect of prolonged water stress on essential oil content, compositions and gene expression patterns of mono- and sesquiterpene synthesis in two oregano (Origanum vulgare L.) subspecies.</title>
        <authorList>
            <person name="Morshedloo M.R."/>
            <person name="Craker L.E."/>
            <person name="Salami A."/>
            <person name="Nazeri V."/>
            <person name="Sang H."/>
            <person name="Maggi F."/>
        </authorList>
    </citation>
    <scope>INDUCTION BY DROUGHT</scope>
</reference>
<reference key="4">
    <citation type="journal article" date="2018" name="Ind. Crops Prod.">
        <title>Divergence in tissue-specific expression patterns of genes associated with the terpenoid biosynthesis in two oregano species Origanum vulgare L., and Origanum majorana.</title>
        <authorList>
            <person name="Jan S."/>
            <person name="Mir J.I."/>
            <person name="Shafi W."/>
            <person name="Faktoo S.Z."/>
            <person name="Singh D.B."/>
            <person name="Wijaya L."/>
            <person name="Alyemeni M.N."/>
            <person name="Ahmad P."/>
        </authorList>
    </citation>
    <scope>TISSUE SPECIFICITY</scope>
</reference>
<sequence>MEFPASVASLSANTVGSNDVLRRSVAYHPNIWGDFFLAHTSEFMEISIAEKEEHEWLKEEIKKLLVQTEYDSILKLELIDSIQRLGVSYHFEKEIDRILRYVHQTYPIYETENKDLRMLALRFRLLRQHGFHVPCDVFSEFIDAEGNLMESIAYDIQGILSLYEASNYGVLGEEILDKALDSCSSHLESLITDTNDDRLSRQVKEALKIPISKTLTRLGARKFISMYKEDDSHNEKLLKFAMLDFNMVQRLHQNELSHLTSWWKELDFANKLPFARDRLVECYFWIMGVYFEPRHEIARKILTKVIYMASVLDDTYDVYGTLDELILFTSVVRRWDISGIDELPTYMRIYLRALFDVYVEMEEEMGKIGKSYAVEYAKEEMKRLAEVYFQEAQWFFSKYKPTMQEYMKVALLSSGYMMMTINSLAVIEDPITKKEFDWVVSEPPILKSSSIITRLMDDLAGYGSEDKYSAVHLYMNEKGVSEEEAFQELRKQVKNSWKNRNKECLEPRSASVPILTTVVNFTRVVVVLYTDEDAYGNSKNKTKDMIKSILVDPV</sequence>
<gene>
    <name evidence="9" type="primary">TPS6</name>
</gene>
<feature type="chain" id="PRO_0000453319" description="(E)-beta-caryophyllene synthase">
    <location>
        <begin position="1"/>
        <end position="554"/>
    </location>
</feature>
<feature type="region of interest" description="Homodimerization" evidence="1">
    <location>
        <begin position="319"/>
        <end position="325"/>
    </location>
</feature>
<feature type="region of interest" description="Homodimerization" evidence="1">
    <location>
        <begin position="391"/>
        <end position="427"/>
    </location>
</feature>
<feature type="short sequence motif" description="DDXXD motif" evidence="4">
    <location>
        <begin position="313"/>
        <end position="317"/>
    </location>
</feature>
<feature type="binding site" evidence="2">
    <location>
        <position position="313"/>
    </location>
    <ligand>
        <name>Mn(2+)</name>
        <dbReference type="ChEBI" id="CHEBI:29035"/>
        <label>1</label>
    </ligand>
</feature>
<feature type="binding site" evidence="2">
    <location>
        <position position="313"/>
    </location>
    <ligand>
        <name>Mn(2+)</name>
        <dbReference type="ChEBI" id="CHEBI:29035"/>
        <label>2</label>
    </ligand>
</feature>
<feature type="binding site" evidence="2">
    <location>
        <position position="317"/>
    </location>
    <ligand>
        <name>Mn(2+)</name>
        <dbReference type="ChEBI" id="CHEBI:29035"/>
        <label>1</label>
    </ligand>
</feature>
<feature type="binding site" evidence="2">
    <location>
        <position position="317"/>
    </location>
    <ligand>
        <name>Mn(2+)</name>
        <dbReference type="ChEBI" id="CHEBI:29035"/>
        <label>2</label>
    </ligand>
</feature>
<feature type="binding site" evidence="2">
    <location>
        <position position="457"/>
    </location>
    <ligand>
        <name>Mn(2+)</name>
        <dbReference type="ChEBI" id="CHEBI:29035"/>
        <label>3</label>
    </ligand>
</feature>
<feature type="binding site" evidence="2">
    <location>
        <position position="465"/>
    </location>
    <ligand>
        <name>Mn(2+)</name>
        <dbReference type="ChEBI" id="CHEBI:29035"/>
        <label>3</label>
    </ligand>
</feature>
<keyword id="KW-0456">Lyase</keyword>
<keyword id="KW-0460">Magnesium</keyword>
<keyword id="KW-0464">Manganese</keyword>
<keyword id="KW-0479">Metal-binding</keyword>
<dbReference type="EC" id="4.2.3.57" evidence="5 7"/>
<dbReference type="EC" id="4.2.3.104" evidence="5 7"/>
<dbReference type="EMBL" id="GU385969">
    <property type="protein sequence ID" value="ADK73615.1"/>
    <property type="molecule type" value="mRNA"/>
</dbReference>
<dbReference type="SMR" id="E2E2N4"/>
<dbReference type="UniPathway" id="UPA00213"/>
<dbReference type="GO" id="GO:0000287">
    <property type="term" value="F:magnesium ion binding"/>
    <property type="evidence" value="ECO:0007669"/>
    <property type="project" value="InterPro"/>
</dbReference>
<dbReference type="GO" id="GO:0042803">
    <property type="term" value="F:protein homodimerization activity"/>
    <property type="evidence" value="ECO:0000250"/>
    <property type="project" value="UniProtKB"/>
</dbReference>
<dbReference type="GO" id="GO:0010333">
    <property type="term" value="F:terpene synthase activity"/>
    <property type="evidence" value="ECO:0007669"/>
    <property type="project" value="InterPro"/>
</dbReference>
<dbReference type="GO" id="GO:0016102">
    <property type="term" value="P:diterpenoid biosynthetic process"/>
    <property type="evidence" value="ECO:0007669"/>
    <property type="project" value="InterPro"/>
</dbReference>
<dbReference type="GO" id="GO:0009414">
    <property type="term" value="P:response to water deprivation"/>
    <property type="evidence" value="ECO:0000270"/>
    <property type="project" value="UniProtKB"/>
</dbReference>
<dbReference type="CDD" id="cd00684">
    <property type="entry name" value="Terpene_cyclase_plant_C1"/>
    <property type="match status" value="1"/>
</dbReference>
<dbReference type="FunFam" id="1.10.600.10:FF:000007">
    <property type="entry name" value="Isoprene synthase, chloroplastic"/>
    <property type="match status" value="1"/>
</dbReference>
<dbReference type="FunFam" id="1.50.10.130:FF:000001">
    <property type="entry name" value="Isoprene synthase, chloroplastic"/>
    <property type="match status" value="1"/>
</dbReference>
<dbReference type="Gene3D" id="1.10.600.10">
    <property type="entry name" value="Farnesyl Diphosphate Synthase"/>
    <property type="match status" value="1"/>
</dbReference>
<dbReference type="Gene3D" id="1.50.10.130">
    <property type="entry name" value="Terpene synthase, N-terminal domain"/>
    <property type="match status" value="1"/>
</dbReference>
<dbReference type="InterPro" id="IPR008949">
    <property type="entry name" value="Isoprenoid_synthase_dom_sf"/>
</dbReference>
<dbReference type="InterPro" id="IPR034741">
    <property type="entry name" value="Terpene_cyclase-like_1_C"/>
</dbReference>
<dbReference type="InterPro" id="IPR044814">
    <property type="entry name" value="Terpene_cyclase_plant_C1"/>
</dbReference>
<dbReference type="InterPro" id="IPR001906">
    <property type="entry name" value="Terpene_synth_N"/>
</dbReference>
<dbReference type="InterPro" id="IPR036965">
    <property type="entry name" value="Terpene_synth_N_sf"/>
</dbReference>
<dbReference type="InterPro" id="IPR050148">
    <property type="entry name" value="Terpene_synthase-like"/>
</dbReference>
<dbReference type="InterPro" id="IPR005630">
    <property type="entry name" value="Terpene_synthase_metal-bd"/>
</dbReference>
<dbReference type="InterPro" id="IPR008930">
    <property type="entry name" value="Terpenoid_cyclase/PrenylTrfase"/>
</dbReference>
<dbReference type="PANTHER" id="PTHR31225:SF221">
    <property type="entry name" value="(-)-GERMACRENE D SYNTHASE"/>
    <property type="match status" value="1"/>
</dbReference>
<dbReference type="PANTHER" id="PTHR31225">
    <property type="entry name" value="OS04G0344100 PROTEIN-RELATED"/>
    <property type="match status" value="1"/>
</dbReference>
<dbReference type="Pfam" id="PF01397">
    <property type="entry name" value="Terpene_synth"/>
    <property type="match status" value="1"/>
</dbReference>
<dbReference type="Pfam" id="PF03936">
    <property type="entry name" value="Terpene_synth_C"/>
    <property type="match status" value="1"/>
</dbReference>
<dbReference type="SFLD" id="SFLDS00005">
    <property type="entry name" value="Isoprenoid_Synthase_Type_I"/>
    <property type="match status" value="1"/>
</dbReference>
<dbReference type="SFLD" id="SFLDG01019">
    <property type="entry name" value="Terpene_Cyclase_Like_1_C_Termi"/>
    <property type="match status" value="1"/>
</dbReference>
<dbReference type="SUPFAM" id="SSF48239">
    <property type="entry name" value="Terpenoid cyclases/Protein prenyltransferases"/>
    <property type="match status" value="1"/>
</dbReference>
<dbReference type="SUPFAM" id="SSF48576">
    <property type="entry name" value="Terpenoid synthases"/>
    <property type="match status" value="1"/>
</dbReference>
<protein>
    <recommendedName>
        <fullName evidence="11">(E)-beta-caryophyllene synthase</fullName>
        <ecNumber evidence="5 7">4.2.3.57</ecNumber>
    </recommendedName>
    <alternativeName>
        <fullName evidence="11">Alpha-humulene synthase</fullName>
        <ecNumber evidence="5 7">4.2.3.104</ecNumber>
    </alternativeName>
    <alternativeName>
        <fullName evidence="9">Terpene synthase 6</fullName>
        <shortName evidence="9">OvTPS6</shortName>
    </alternativeName>
</protein>
<comment type="function">
    <text evidence="5 7">Involved in the biosynthesis of phenolic sesquiterpenes natural products (Ref.2). Sesquiterpene synthase converting (2E,6E)-farnesyl diphosphate (FPP) to (E)-beta-caryophyllene and alpha-humulene (PubMed:20419468, Ref.2).</text>
</comment>
<comment type="catalytic activity">
    <reaction evidence="5 7">
        <text>(2E,6E)-farnesyl diphosphate = (-)-(E)-beta-caryophyllene + diphosphate</text>
        <dbReference type="Rhea" id="RHEA:28294"/>
        <dbReference type="ChEBI" id="CHEBI:10357"/>
        <dbReference type="ChEBI" id="CHEBI:33019"/>
        <dbReference type="ChEBI" id="CHEBI:175763"/>
        <dbReference type="EC" id="4.2.3.57"/>
    </reaction>
    <physiologicalReaction direction="left-to-right" evidence="5 7">
        <dbReference type="Rhea" id="RHEA:28295"/>
    </physiologicalReaction>
</comment>
<comment type="catalytic activity">
    <reaction evidence="5 7">
        <text>(2E,6E)-farnesyl diphosphate = alpha-humulene + diphosphate</text>
        <dbReference type="Rhea" id="RHEA:31895"/>
        <dbReference type="ChEBI" id="CHEBI:5768"/>
        <dbReference type="ChEBI" id="CHEBI:33019"/>
        <dbReference type="ChEBI" id="CHEBI:175763"/>
        <dbReference type="EC" id="4.2.3.104"/>
    </reaction>
    <physiologicalReaction direction="left-to-right" evidence="5 7">
        <dbReference type="Rhea" id="RHEA:31896"/>
    </physiologicalReaction>
</comment>
<comment type="cofactor">
    <cofactor evidence="3">
        <name>Mn(2+)</name>
        <dbReference type="ChEBI" id="CHEBI:29035"/>
    </cofactor>
    <cofactor evidence="3">
        <name>Mg(2+)</name>
        <dbReference type="ChEBI" id="CHEBI:18420"/>
    </cofactor>
    <text evidence="3">Binds 3 Mg(2+) or Mn(2+) ions per subunit.</text>
</comment>
<comment type="pathway">
    <text evidence="5 7">Secondary metabolite biosynthesis; terpenoid biosynthesis.</text>
</comment>
<comment type="subunit">
    <text evidence="1">Homodimer.</text>
</comment>
<comment type="tissue specificity">
    <text evidence="5 8">Expressed in peltate glandular trichomes (PubMed:20419468). Present at low levels in flowers, leaves and stems (Ref.4).</text>
</comment>
<comment type="induction">
    <text evidence="6">Induced by drought.</text>
</comment>
<comment type="domain">
    <text evidence="4">The Asp-Asp-Xaa-Xaa-Asp/Glu (DDXXD/E) motif is important for the catalytic activity, presumably through binding to Mg(2+).</text>
</comment>
<comment type="similarity">
    <text evidence="10">Belongs to the terpene synthase family.</text>
</comment>
<name>BCPSF_ORIVU</name>
<organism>
    <name type="scientific">Origanum vulgare</name>
    <name type="common">Wild marjoram</name>
    <dbReference type="NCBI Taxonomy" id="39352"/>
    <lineage>
        <taxon>Eukaryota</taxon>
        <taxon>Viridiplantae</taxon>
        <taxon>Streptophyta</taxon>
        <taxon>Embryophyta</taxon>
        <taxon>Tracheophyta</taxon>
        <taxon>Spermatophyta</taxon>
        <taxon>Magnoliopsida</taxon>
        <taxon>eudicotyledons</taxon>
        <taxon>Gunneridae</taxon>
        <taxon>Pentapetalae</taxon>
        <taxon>asterids</taxon>
        <taxon>lamiids</taxon>
        <taxon>Lamiales</taxon>
        <taxon>Lamiaceae</taxon>
        <taxon>Nepetoideae</taxon>
        <taxon>Mentheae</taxon>
        <taxon>Origanum</taxon>
    </lineage>
</organism>
<evidence type="ECO:0000250" key="1">
    <source>
        <dbReference type="UniProtKB" id="A0A0M3Q1Q3"/>
    </source>
</evidence>
<evidence type="ECO:0000250" key="2">
    <source>
        <dbReference type="UniProtKB" id="A0A1C9J6A7"/>
    </source>
</evidence>
<evidence type="ECO:0000250" key="3">
    <source>
        <dbReference type="UniProtKB" id="E2E2P0"/>
    </source>
</evidence>
<evidence type="ECO:0000250" key="4">
    <source>
        <dbReference type="UniProtKB" id="Q9X839"/>
    </source>
</evidence>
<evidence type="ECO:0000269" key="5">
    <source>
    </source>
</evidence>
<evidence type="ECO:0000269" key="6">
    <source>
    </source>
</evidence>
<evidence type="ECO:0000269" key="7">
    <source ref="2"/>
</evidence>
<evidence type="ECO:0000269" key="8">
    <source ref="4"/>
</evidence>
<evidence type="ECO:0000303" key="9">
    <source>
    </source>
</evidence>
<evidence type="ECO:0000305" key="10"/>
<evidence type="ECO:0000305" key="11">
    <source>
    </source>
</evidence>